<evidence type="ECO:0000255" key="1">
    <source>
        <dbReference type="HAMAP-Rule" id="MF_00672"/>
    </source>
</evidence>
<protein>
    <recommendedName>
        <fullName evidence="1">UPF0761 membrane protein VCD_001626</fullName>
    </recommendedName>
</protein>
<accession>C3NUE6</accession>
<gene>
    <name type="ordered locus">VCD_001626</name>
</gene>
<keyword id="KW-0997">Cell inner membrane</keyword>
<keyword id="KW-1003">Cell membrane</keyword>
<keyword id="KW-0472">Membrane</keyword>
<keyword id="KW-0812">Transmembrane</keyword>
<keyword id="KW-1133">Transmembrane helix</keyword>
<name>Y1626_VIBCJ</name>
<feature type="chain" id="PRO_0000391062" description="UPF0761 membrane protein VCD_001626">
    <location>
        <begin position="1"/>
        <end position="297"/>
    </location>
</feature>
<feature type="transmembrane region" description="Helical" evidence="1">
    <location>
        <begin position="43"/>
        <end position="63"/>
    </location>
</feature>
<feature type="transmembrane region" description="Helical" evidence="1">
    <location>
        <begin position="100"/>
        <end position="120"/>
    </location>
</feature>
<feature type="transmembrane region" description="Helical" evidence="1">
    <location>
        <begin position="135"/>
        <end position="155"/>
    </location>
</feature>
<feature type="transmembrane region" description="Helical" evidence="1">
    <location>
        <begin position="181"/>
        <end position="201"/>
    </location>
</feature>
<feature type="transmembrane region" description="Helical" evidence="1">
    <location>
        <begin position="213"/>
        <end position="233"/>
    </location>
</feature>
<feature type="transmembrane region" description="Helical" evidence="1">
    <location>
        <begin position="245"/>
        <end position="265"/>
    </location>
</feature>
<organism>
    <name type="scientific">Vibrio cholerae serotype O1 (strain MJ-1236)</name>
    <dbReference type="NCBI Taxonomy" id="593588"/>
    <lineage>
        <taxon>Bacteria</taxon>
        <taxon>Pseudomonadati</taxon>
        <taxon>Pseudomonadota</taxon>
        <taxon>Gammaproteobacteria</taxon>
        <taxon>Vibrionales</taxon>
        <taxon>Vibrionaceae</taxon>
        <taxon>Vibrio</taxon>
    </lineage>
</organism>
<dbReference type="EMBL" id="CP001485">
    <property type="protein sequence ID" value="ACQ59795.1"/>
    <property type="molecule type" value="Genomic_DNA"/>
</dbReference>
<dbReference type="RefSeq" id="WP_001884068.1">
    <property type="nucleotide sequence ID" value="NC_012668.1"/>
</dbReference>
<dbReference type="KEGG" id="vcj:VCD_001626"/>
<dbReference type="HOGENOM" id="CLU_032288_0_0_6"/>
<dbReference type="GO" id="GO:0005886">
    <property type="term" value="C:plasma membrane"/>
    <property type="evidence" value="ECO:0007669"/>
    <property type="project" value="UniProtKB-SubCell"/>
</dbReference>
<dbReference type="HAMAP" id="MF_00672">
    <property type="entry name" value="UPF0761"/>
    <property type="match status" value="1"/>
</dbReference>
<dbReference type="InterPro" id="IPR023679">
    <property type="entry name" value="UPF0761_bac"/>
</dbReference>
<dbReference type="InterPro" id="IPR017039">
    <property type="entry name" value="Virul_fac_BrkB"/>
</dbReference>
<dbReference type="NCBIfam" id="NF002457">
    <property type="entry name" value="PRK01637.1"/>
    <property type="match status" value="1"/>
</dbReference>
<dbReference type="NCBIfam" id="TIGR00765">
    <property type="entry name" value="yihY_not_rbn"/>
    <property type="match status" value="1"/>
</dbReference>
<dbReference type="PANTHER" id="PTHR30213">
    <property type="entry name" value="INNER MEMBRANE PROTEIN YHJD"/>
    <property type="match status" value="1"/>
</dbReference>
<dbReference type="PANTHER" id="PTHR30213:SF0">
    <property type="entry name" value="UPF0761 MEMBRANE PROTEIN YIHY"/>
    <property type="match status" value="1"/>
</dbReference>
<dbReference type="Pfam" id="PF03631">
    <property type="entry name" value="Virul_fac_BrkB"/>
    <property type="match status" value="1"/>
</dbReference>
<dbReference type="PIRSF" id="PIRSF035875">
    <property type="entry name" value="RNase_BN"/>
    <property type="match status" value="1"/>
</dbReference>
<proteinExistence type="inferred from homology"/>
<sequence>MKLTHSFIKQQARLGLNFFRYLLARMNHDRVNVNAGYLAYITLLSMVPMLTVLLSILSSFALFANAGEVIQDFVITHFVPAAGEVVKTALIEFVANTGKMTAVGGAFLFVAAIMLISNIDKNLNYIWRVQQKRRAVFSFSMYWMILTLGPILVGASIAATSYITSLKILDNEALSGVYNLFLRWLPFVLSYCAFVGLYLLVPNKKVHWQHAMLGALIAAILFELSKKGFAAYITQFPSYQLIYGALAAIPILFVWVYLCWLIVLVGAEVTAALGEREHWSDSQDMLHFAPLPKNEKE</sequence>
<reference key="1">
    <citation type="journal article" date="2009" name="Proc. Natl. Acad. Sci. U.S.A.">
        <title>Comparative genomics reveals mechanism for short-term and long-term clonal transitions in pandemic Vibrio cholerae.</title>
        <authorList>
            <person name="Chun J."/>
            <person name="Grim C.J."/>
            <person name="Hasan N.A."/>
            <person name="Lee J.H."/>
            <person name="Choi S.Y."/>
            <person name="Haley B.J."/>
            <person name="Taviani E."/>
            <person name="Jeon Y.-S."/>
            <person name="Kim D.W."/>
            <person name="Lee J.-H."/>
            <person name="Brettin T.S."/>
            <person name="Bruce D.C."/>
            <person name="Challacombe J.F."/>
            <person name="Detter J.C."/>
            <person name="Han C.S."/>
            <person name="Munk A.C."/>
            <person name="Chertkov O."/>
            <person name="Meincke L."/>
            <person name="Saunders E."/>
            <person name="Walters R.A."/>
            <person name="Huq A."/>
            <person name="Nair G.B."/>
            <person name="Colwell R.R."/>
        </authorList>
    </citation>
    <scope>NUCLEOTIDE SEQUENCE [LARGE SCALE GENOMIC DNA]</scope>
    <source>
        <strain>MJ-1236</strain>
    </source>
</reference>
<comment type="subcellular location">
    <subcellularLocation>
        <location evidence="1">Cell inner membrane</location>
        <topology evidence="1">Multi-pass membrane protein</topology>
    </subcellularLocation>
</comment>
<comment type="similarity">
    <text evidence="1">Belongs to the UPF0761 family.</text>
</comment>